<protein>
    <recommendedName>
        <fullName>Cytochrome b</fullName>
    </recommendedName>
    <alternativeName>
        <fullName>Complex III subunit 3</fullName>
    </alternativeName>
    <alternativeName>
        <fullName>Complex III subunit III</fullName>
    </alternativeName>
    <alternativeName>
        <fullName>Cytochrome b-c1 complex subunit 3</fullName>
    </alternativeName>
    <alternativeName>
        <fullName>Ubiquinol-cytochrome-c reductase complex cytochrome b subunit</fullName>
    </alternativeName>
</protein>
<name>CYB_PERTU</name>
<comment type="function">
    <text evidence="2">Component of the ubiquinol-cytochrome c reductase complex (complex III or cytochrome b-c1 complex) that is part of the mitochondrial respiratory chain. The b-c1 complex mediates electron transfer from ubiquinol to cytochrome c. Contributes to the generation of a proton gradient across the mitochondrial membrane that is then used for ATP synthesis.</text>
</comment>
<comment type="cofactor">
    <cofactor evidence="2">
        <name>heme b</name>
        <dbReference type="ChEBI" id="CHEBI:60344"/>
    </cofactor>
    <text evidence="2">Binds 2 heme b groups non-covalently.</text>
</comment>
<comment type="subunit">
    <text evidence="2">The cytochrome bc1 complex contains 11 subunits: 3 respiratory subunits (MT-CYB, CYC1 and UQCRFS1), 2 core proteins (UQCRC1 and UQCRC2) and 6 low-molecular weight proteins (UQCRH/QCR6, UQCRB/QCR7, UQCRQ/QCR8, UQCR10/QCR9, UQCR11/QCR10 and a cleavage product of UQCRFS1). This cytochrome bc1 complex then forms a dimer.</text>
</comment>
<comment type="subcellular location">
    <subcellularLocation>
        <location evidence="2">Mitochondrion inner membrane</location>
        <topology evidence="2">Multi-pass membrane protein</topology>
    </subcellularLocation>
</comment>
<comment type="miscellaneous">
    <text evidence="1">Heme 1 (or BL or b562) is low-potential and absorbs at about 562 nm, and heme 2 (or BH or b566) is high-potential and absorbs at about 566 nm.</text>
</comment>
<comment type="similarity">
    <text evidence="3 4">Belongs to the cytochrome b family.</text>
</comment>
<comment type="caution">
    <text evidence="2">The full-length protein contains only eight transmembrane helices, not nine as predicted by bioinformatics tools.</text>
</comment>
<accession>Q9XNU5</accession>
<keyword id="KW-0249">Electron transport</keyword>
<keyword id="KW-0349">Heme</keyword>
<keyword id="KW-0408">Iron</keyword>
<keyword id="KW-0472">Membrane</keyword>
<keyword id="KW-0479">Metal-binding</keyword>
<keyword id="KW-0496">Mitochondrion</keyword>
<keyword id="KW-0999">Mitochondrion inner membrane</keyword>
<keyword id="KW-0679">Respiratory chain</keyword>
<keyword id="KW-0812">Transmembrane</keyword>
<keyword id="KW-1133">Transmembrane helix</keyword>
<keyword id="KW-0813">Transport</keyword>
<keyword id="KW-0830">Ubiquinone</keyword>
<proteinExistence type="inferred from homology"/>
<sequence length="381" mass="43032">MTNIRKKHPLFKIINDSFIDLPTPSNISSWWNFGSLLGICLVIQILTGLFLAMHYTSDTTTAFSSVTHICRDVNYGWLIRYMHANGASMFFICLFLHVGRGXYYGSYTFTETWNIGIVLLFAVMATAFMGYVLPWGQMSFWGATVITNLLSAIPYIGTTLVEWIWGGFSVDKATLTRFFAFHFILPFIITALVIVHLLFLHETGSNNPSGLNSDADKIPFHPYYTIKDILGILLLLMVLMILVLFFPDILGDPDNYTPANPLNTPAHIKPEWYFLFAYAILRSIPNKLGGVMALIMSILILALLPFLHTSKQRGLTFRPITQVLFWILVANLFILTWIGGXPVEHPFVMIGQLASISYFTIIIVLMPIAGMIEDNMLKIYP</sequence>
<organism>
    <name type="scientific">Peromyscus truei</name>
    <name type="common">Pinyon mouse</name>
    <name type="synonym">Hesperomys truei</name>
    <dbReference type="NCBI Taxonomy" id="89101"/>
    <lineage>
        <taxon>Eukaryota</taxon>
        <taxon>Metazoa</taxon>
        <taxon>Chordata</taxon>
        <taxon>Craniata</taxon>
        <taxon>Vertebrata</taxon>
        <taxon>Euteleostomi</taxon>
        <taxon>Mammalia</taxon>
        <taxon>Eutheria</taxon>
        <taxon>Euarchontoglires</taxon>
        <taxon>Glires</taxon>
        <taxon>Rodentia</taxon>
        <taxon>Myomorpha</taxon>
        <taxon>Muroidea</taxon>
        <taxon>Cricetidae</taxon>
        <taxon>Neotominae</taxon>
        <taxon>Peromyscus</taxon>
    </lineage>
</organism>
<geneLocation type="mitochondrion"/>
<gene>
    <name type="primary">MT-CYB</name>
    <name type="synonym">COB</name>
    <name type="synonym">CYTB</name>
    <name type="synonym">MTCYB</name>
</gene>
<feature type="chain" id="PRO_0000061374" description="Cytochrome b">
    <location>
        <begin position="1"/>
        <end position="381"/>
    </location>
</feature>
<feature type="transmembrane region" description="Helical" evidence="2">
    <location>
        <begin position="33"/>
        <end position="53"/>
    </location>
</feature>
<feature type="transmembrane region" description="Helical" evidence="2">
    <location>
        <begin position="77"/>
        <end position="98"/>
    </location>
</feature>
<feature type="transmembrane region" description="Helical" evidence="2">
    <location>
        <begin position="113"/>
        <end position="133"/>
    </location>
</feature>
<feature type="transmembrane region" description="Helical" evidence="2">
    <location>
        <begin position="178"/>
        <end position="198"/>
    </location>
</feature>
<feature type="transmembrane region" description="Helical" evidence="2">
    <location>
        <begin position="226"/>
        <end position="246"/>
    </location>
</feature>
<feature type="transmembrane region" description="Helical" evidence="2">
    <location>
        <begin position="288"/>
        <end position="308"/>
    </location>
</feature>
<feature type="transmembrane region" description="Helical" evidence="2">
    <location>
        <begin position="320"/>
        <end position="340"/>
    </location>
</feature>
<feature type="transmembrane region" description="Helical" evidence="2">
    <location>
        <begin position="347"/>
        <end position="367"/>
    </location>
</feature>
<feature type="binding site" description="axial binding residue" evidence="2">
    <location>
        <position position="83"/>
    </location>
    <ligand>
        <name>heme b</name>
        <dbReference type="ChEBI" id="CHEBI:60344"/>
        <label>b562</label>
    </ligand>
    <ligandPart>
        <name>Fe</name>
        <dbReference type="ChEBI" id="CHEBI:18248"/>
    </ligandPart>
</feature>
<feature type="binding site" description="axial binding residue" evidence="2">
    <location>
        <position position="97"/>
    </location>
    <ligand>
        <name>heme b</name>
        <dbReference type="ChEBI" id="CHEBI:60344"/>
        <label>b566</label>
    </ligand>
    <ligandPart>
        <name>Fe</name>
        <dbReference type="ChEBI" id="CHEBI:18248"/>
    </ligandPart>
</feature>
<feature type="binding site" description="axial binding residue" evidence="2">
    <location>
        <position position="182"/>
    </location>
    <ligand>
        <name>heme b</name>
        <dbReference type="ChEBI" id="CHEBI:60344"/>
        <label>b562</label>
    </ligand>
    <ligandPart>
        <name>Fe</name>
        <dbReference type="ChEBI" id="CHEBI:18248"/>
    </ligandPart>
</feature>
<feature type="binding site" description="axial binding residue" evidence="2">
    <location>
        <position position="196"/>
    </location>
    <ligand>
        <name>heme b</name>
        <dbReference type="ChEBI" id="CHEBI:60344"/>
        <label>b566</label>
    </ligand>
    <ligandPart>
        <name>Fe</name>
        <dbReference type="ChEBI" id="CHEBI:18248"/>
    </ligandPart>
</feature>
<feature type="binding site" evidence="2">
    <location>
        <position position="201"/>
    </location>
    <ligand>
        <name>a ubiquinone</name>
        <dbReference type="ChEBI" id="CHEBI:16389"/>
    </ligand>
</feature>
<evidence type="ECO:0000250" key="1"/>
<evidence type="ECO:0000250" key="2">
    <source>
        <dbReference type="UniProtKB" id="P00157"/>
    </source>
</evidence>
<evidence type="ECO:0000255" key="3">
    <source>
        <dbReference type="PROSITE-ProRule" id="PRU00967"/>
    </source>
</evidence>
<evidence type="ECO:0000255" key="4">
    <source>
        <dbReference type="PROSITE-ProRule" id="PRU00968"/>
    </source>
</evidence>
<reference key="1">
    <citation type="journal article" date="1999" name="J. Mammal. Evol.">
        <title>Phylogenetic relationships and the radiation of sigmodontine rodents in South America: evidence from cytochrome b.</title>
        <authorList>
            <person name="Smith M.F."/>
            <person name="Patton J.L."/>
        </authorList>
    </citation>
    <scope>NUCLEOTIDE SEQUENCE [GENOMIC DNA]</scope>
    <source>
        <strain>Isolate MVZ 157329</strain>
    </source>
</reference>
<dbReference type="EMBL" id="AF108703">
    <property type="protein sequence ID" value="AAD45485.1"/>
    <property type="molecule type" value="Genomic_DNA"/>
</dbReference>
<dbReference type="GO" id="GO:0005743">
    <property type="term" value="C:mitochondrial inner membrane"/>
    <property type="evidence" value="ECO:0007669"/>
    <property type="project" value="UniProtKB-SubCell"/>
</dbReference>
<dbReference type="GO" id="GO:0045275">
    <property type="term" value="C:respiratory chain complex III"/>
    <property type="evidence" value="ECO:0007669"/>
    <property type="project" value="InterPro"/>
</dbReference>
<dbReference type="GO" id="GO:0046872">
    <property type="term" value="F:metal ion binding"/>
    <property type="evidence" value="ECO:0007669"/>
    <property type="project" value="UniProtKB-KW"/>
</dbReference>
<dbReference type="GO" id="GO:0008121">
    <property type="term" value="F:ubiquinol-cytochrome-c reductase activity"/>
    <property type="evidence" value="ECO:0007669"/>
    <property type="project" value="InterPro"/>
</dbReference>
<dbReference type="GO" id="GO:0006122">
    <property type="term" value="P:mitochondrial electron transport, ubiquinol to cytochrome c"/>
    <property type="evidence" value="ECO:0007669"/>
    <property type="project" value="TreeGrafter"/>
</dbReference>
<dbReference type="CDD" id="cd00290">
    <property type="entry name" value="cytochrome_b_C"/>
    <property type="match status" value="1"/>
</dbReference>
<dbReference type="CDD" id="cd00284">
    <property type="entry name" value="Cytochrome_b_N"/>
    <property type="match status" value="1"/>
</dbReference>
<dbReference type="FunFam" id="1.20.810.10:FF:000002">
    <property type="entry name" value="Cytochrome b"/>
    <property type="match status" value="1"/>
</dbReference>
<dbReference type="Gene3D" id="1.20.810.10">
    <property type="entry name" value="Cytochrome Bc1 Complex, Chain C"/>
    <property type="match status" value="1"/>
</dbReference>
<dbReference type="InterPro" id="IPR005798">
    <property type="entry name" value="Cyt_b/b6_C"/>
</dbReference>
<dbReference type="InterPro" id="IPR036150">
    <property type="entry name" value="Cyt_b/b6_C_sf"/>
</dbReference>
<dbReference type="InterPro" id="IPR005797">
    <property type="entry name" value="Cyt_b/b6_N"/>
</dbReference>
<dbReference type="InterPro" id="IPR027387">
    <property type="entry name" value="Cytb/b6-like_sf"/>
</dbReference>
<dbReference type="InterPro" id="IPR030689">
    <property type="entry name" value="Cytochrome_b"/>
</dbReference>
<dbReference type="InterPro" id="IPR048260">
    <property type="entry name" value="Cytochrome_b_C_euk/bac"/>
</dbReference>
<dbReference type="InterPro" id="IPR048259">
    <property type="entry name" value="Cytochrome_b_N_euk/bac"/>
</dbReference>
<dbReference type="InterPro" id="IPR016174">
    <property type="entry name" value="Di-haem_cyt_TM"/>
</dbReference>
<dbReference type="PANTHER" id="PTHR19271">
    <property type="entry name" value="CYTOCHROME B"/>
    <property type="match status" value="1"/>
</dbReference>
<dbReference type="PANTHER" id="PTHR19271:SF16">
    <property type="entry name" value="CYTOCHROME B"/>
    <property type="match status" value="1"/>
</dbReference>
<dbReference type="Pfam" id="PF00032">
    <property type="entry name" value="Cytochrom_B_C"/>
    <property type="match status" value="1"/>
</dbReference>
<dbReference type="Pfam" id="PF00033">
    <property type="entry name" value="Cytochrome_B"/>
    <property type="match status" value="1"/>
</dbReference>
<dbReference type="PIRSF" id="PIRSF038885">
    <property type="entry name" value="COB"/>
    <property type="match status" value="1"/>
</dbReference>
<dbReference type="SUPFAM" id="SSF81648">
    <property type="entry name" value="a domain/subunit of cytochrome bc1 complex (Ubiquinol-cytochrome c reductase)"/>
    <property type="match status" value="1"/>
</dbReference>
<dbReference type="SUPFAM" id="SSF81342">
    <property type="entry name" value="Transmembrane di-heme cytochromes"/>
    <property type="match status" value="1"/>
</dbReference>
<dbReference type="PROSITE" id="PS51003">
    <property type="entry name" value="CYTB_CTER"/>
    <property type="match status" value="1"/>
</dbReference>
<dbReference type="PROSITE" id="PS51002">
    <property type="entry name" value="CYTB_NTER"/>
    <property type="match status" value="1"/>
</dbReference>